<reference key="1">
    <citation type="journal article" date="2001" name="Nature">
        <title>Genome sequence of enterohaemorrhagic Escherichia coli O157:H7.</title>
        <authorList>
            <person name="Perna N.T."/>
            <person name="Plunkett G. III"/>
            <person name="Burland V."/>
            <person name="Mau B."/>
            <person name="Glasner J.D."/>
            <person name="Rose D.J."/>
            <person name="Mayhew G.F."/>
            <person name="Evans P.S."/>
            <person name="Gregor J."/>
            <person name="Kirkpatrick H.A."/>
            <person name="Posfai G."/>
            <person name="Hackett J."/>
            <person name="Klink S."/>
            <person name="Boutin A."/>
            <person name="Shao Y."/>
            <person name="Miller L."/>
            <person name="Grotbeck E.J."/>
            <person name="Davis N.W."/>
            <person name="Lim A."/>
            <person name="Dimalanta E.T."/>
            <person name="Potamousis K."/>
            <person name="Apodaca J."/>
            <person name="Anantharaman T.S."/>
            <person name="Lin J."/>
            <person name="Yen G."/>
            <person name="Schwartz D.C."/>
            <person name="Welch R.A."/>
            <person name="Blattner F.R."/>
        </authorList>
    </citation>
    <scope>NUCLEOTIDE SEQUENCE [LARGE SCALE GENOMIC DNA]</scope>
    <source>
        <strain>O157:H7 / EDL933 / ATCC 700927 / EHEC</strain>
    </source>
</reference>
<reference key="2">
    <citation type="journal article" date="2001" name="DNA Res.">
        <title>Complete genome sequence of enterohemorrhagic Escherichia coli O157:H7 and genomic comparison with a laboratory strain K-12.</title>
        <authorList>
            <person name="Hayashi T."/>
            <person name="Makino K."/>
            <person name="Ohnishi M."/>
            <person name="Kurokawa K."/>
            <person name="Ishii K."/>
            <person name="Yokoyama K."/>
            <person name="Han C.-G."/>
            <person name="Ohtsubo E."/>
            <person name="Nakayama K."/>
            <person name="Murata T."/>
            <person name="Tanaka M."/>
            <person name="Tobe T."/>
            <person name="Iida T."/>
            <person name="Takami H."/>
            <person name="Honda T."/>
            <person name="Sasakawa C."/>
            <person name="Ogasawara N."/>
            <person name="Yasunaga T."/>
            <person name="Kuhara S."/>
            <person name="Shiba T."/>
            <person name="Hattori M."/>
            <person name="Shinagawa H."/>
        </authorList>
    </citation>
    <scope>NUCLEOTIDE SEQUENCE [LARGE SCALE GENOMIC DNA]</scope>
    <source>
        <strain>O157:H7 / Sakai / RIMD 0509952 / EHEC</strain>
    </source>
</reference>
<keyword id="KW-0997">Cell inner membrane</keyword>
<keyword id="KW-1003">Cell membrane</keyword>
<keyword id="KW-0472">Membrane</keyword>
<keyword id="KW-0571">Peptide transport</keyword>
<keyword id="KW-0653">Protein transport</keyword>
<keyword id="KW-1185">Reference proteome</keyword>
<keyword id="KW-0812">Transmembrane</keyword>
<keyword id="KW-1133">Transmembrane helix</keyword>
<keyword id="KW-0813">Transport</keyword>
<name>OPPB_ECO57</name>
<comment type="function">
    <text evidence="1">Part of the ABC transporter complex OppABCDF involved in the uptake of oligopeptides (By similarity). Probably responsible for the translocation of the substrate across the membrane (By similarity).</text>
</comment>
<comment type="subunit">
    <text evidence="1">The complex is composed of two ATP-binding proteins (OppD and OppF), two transmembrane proteins (OppB and OppC) and a solute-binding protein (OppA).</text>
</comment>
<comment type="subcellular location">
    <subcellularLocation>
        <location evidence="1">Cell inner membrane</location>
        <topology evidence="2">Multi-pass membrane protein</topology>
    </subcellularLocation>
</comment>
<comment type="similarity">
    <text evidence="4">Belongs to the binding-protein-dependent transport system permease family. OppBC subfamily.</text>
</comment>
<evidence type="ECO:0000250" key="1">
    <source>
        <dbReference type="UniProtKB" id="P0AFH2"/>
    </source>
</evidence>
<evidence type="ECO:0000255" key="2"/>
<evidence type="ECO:0000255" key="3">
    <source>
        <dbReference type="PROSITE-ProRule" id="PRU00441"/>
    </source>
</evidence>
<evidence type="ECO:0000305" key="4"/>
<protein>
    <recommendedName>
        <fullName evidence="4">Oligopeptide transport system permease protein OppB</fullName>
    </recommendedName>
</protein>
<proteinExistence type="inferred from homology"/>
<accession>P0AFH4</accession>
<accession>P31132</accession>
<accession>P76026</accession>
<accession>P77550</accession>
<gene>
    <name type="primary">oppB</name>
    <name type="ordered locus">Z2020</name>
    <name type="ordered locus">ECs1744</name>
</gene>
<feature type="chain" id="PRO_0000060144" description="Oligopeptide transport system permease protein OppB">
    <location>
        <begin position="1"/>
        <end position="306"/>
    </location>
</feature>
<feature type="topological domain" description="Cytoplasmic" evidence="4">
    <location>
        <begin position="1"/>
        <end position="11"/>
    </location>
</feature>
<feature type="transmembrane region" description="Helical" evidence="2">
    <location>
        <begin position="12"/>
        <end position="32"/>
    </location>
</feature>
<feature type="topological domain" description="Periplasmic" evidence="4">
    <location>
        <begin position="33"/>
        <end position="99"/>
    </location>
</feature>
<feature type="transmembrane region" description="Helical" evidence="2">
    <location>
        <begin position="100"/>
        <end position="120"/>
    </location>
</feature>
<feature type="topological domain" description="Cytoplasmic" evidence="4">
    <location>
        <begin position="121"/>
        <end position="137"/>
    </location>
</feature>
<feature type="transmembrane region" description="Helical" evidence="2">
    <location>
        <begin position="138"/>
        <end position="158"/>
    </location>
</feature>
<feature type="topological domain" description="Periplasmic" evidence="4">
    <location>
        <begin position="159"/>
        <end position="169"/>
    </location>
</feature>
<feature type="transmembrane region" description="Helical" evidence="2">
    <location>
        <begin position="170"/>
        <end position="190"/>
    </location>
</feature>
<feature type="topological domain" description="Cytoplasmic" evidence="4">
    <location>
        <begin position="191"/>
        <end position="229"/>
    </location>
</feature>
<feature type="transmembrane region" description="Helical" evidence="2">
    <location>
        <begin position="230"/>
        <end position="250"/>
    </location>
</feature>
<feature type="topological domain" description="Periplasmic" evidence="4">
    <location>
        <begin position="251"/>
        <end position="279"/>
    </location>
</feature>
<feature type="transmembrane region" description="Helical" evidence="2">
    <location>
        <begin position="280"/>
        <end position="300"/>
    </location>
</feature>
<feature type="topological domain" description="Cytoplasmic" evidence="1">
    <location>
        <begin position="301"/>
        <end position="306"/>
    </location>
</feature>
<feature type="domain" description="ABC transmembrane type-1" evidence="3">
    <location>
        <begin position="94"/>
        <end position="293"/>
    </location>
</feature>
<dbReference type="EMBL" id="AE005174">
    <property type="protein sequence ID" value="AAG56099.1"/>
    <property type="molecule type" value="Genomic_DNA"/>
</dbReference>
<dbReference type="EMBL" id="BA000007">
    <property type="protein sequence ID" value="BAB35167.1"/>
    <property type="molecule type" value="Genomic_DNA"/>
</dbReference>
<dbReference type="PIR" id="H90846">
    <property type="entry name" value="H90846"/>
</dbReference>
<dbReference type="RefSeq" id="NP_309771.1">
    <property type="nucleotide sequence ID" value="NC_002695.1"/>
</dbReference>
<dbReference type="RefSeq" id="WP_000911112.1">
    <property type="nucleotide sequence ID" value="NZ_VOAI01000031.1"/>
</dbReference>
<dbReference type="SMR" id="P0AFH4"/>
<dbReference type="STRING" id="155864.Z2020"/>
<dbReference type="GeneID" id="75203356"/>
<dbReference type="GeneID" id="913107"/>
<dbReference type="KEGG" id="ece:Z2020"/>
<dbReference type="KEGG" id="ecs:ECs_1744"/>
<dbReference type="PATRIC" id="fig|386585.9.peg.1846"/>
<dbReference type="eggNOG" id="COG0601">
    <property type="taxonomic scope" value="Bacteria"/>
</dbReference>
<dbReference type="HOGENOM" id="CLU_036879_0_0_6"/>
<dbReference type="OMA" id="IPMWWFG"/>
<dbReference type="Proteomes" id="UP000000558">
    <property type="component" value="Chromosome"/>
</dbReference>
<dbReference type="Proteomes" id="UP000002519">
    <property type="component" value="Chromosome"/>
</dbReference>
<dbReference type="GO" id="GO:0005886">
    <property type="term" value="C:plasma membrane"/>
    <property type="evidence" value="ECO:0007669"/>
    <property type="project" value="UniProtKB-SubCell"/>
</dbReference>
<dbReference type="GO" id="GO:0015833">
    <property type="term" value="P:peptide transport"/>
    <property type="evidence" value="ECO:0007669"/>
    <property type="project" value="UniProtKB-KW"/>
</dbReference>
<dbReference type="GO" id="GO:0015031">
    <property type="term" value="P:protein transport"/>
    <property type="evidence" value="ECO:0007669"/>
    <property type="project" value="UniProtKB-KW"/>
</dbReference>
<dbReference type="GO" id="GO:0055085">
    <property type="term" value="P:transmembrane transport"/>
    <property type="evidence" value="ECO:0007669"/>
    <property type="project" value="InterPro"/>
</dbReference>
<dbReference type="CDD" id="cd06261">
    <property type="entry name" value="TM_PBP2"/>
    <property type="match status" value="1"/>
</dbReference>
<dbReference type="FunFam" id="1.10.3720.10:FF:000016">
    <property type="entry name" value="Oligopeptide transport system permease OppB"/>
    <property type="match status" value="1"/>
</dbReference>
<dbReference type="Gene3D" id="1.10.3720.10">
    <property type="entry name" value="MetI-like"/>
    <property type="match status" value="1"/>
</dbReference>
<dbReference type="InterPro" id="IPR045621">
    <property type="entry name" value="BPD_transp_1_N"/>
</dbReference>
<dbReference type="InterPro" id="IPR000515">
    <property type="entry name" value="MetI-like"/>
</dbReference>
<dbReference type="InterPro" id="IPR035906">
    <property type="entry name" value="MetI-like_sf"/>
</dbReference>
<dbReference type="NCBIfam" id="NF007008">
    <property type="entry name" value="PRK09471.1"/>
    <property type="match status" value="1"/>
</dbReference>
<dbReference type="PANTHER" id="PTHR43163">
    <property type="entry name" value="DIPEPTIDE TRANSPORT SYSTEM PERMEASE PROTEIN DPPB-RELATED"/>
    <property type="match status" value="1"/>
</dbReference>
<dbReference type="PANTHER" id="PTHR43163:SF6">
    <property type="entry name" value="DIPEPTIDE TRANSPORT SYSTEM PERMEASE PROTEIN DPPB-RELATED"/>
    <property type="match status" value="1"/>
</dbReference>
<dbReference type="Pfam" id="PF00528">
    <property type="entry name" value="BPD_transp_1"/>
    <property type="match status" value="1"/>
</dbReference>
<dbReference type="Pfam" id="PF19300">
    <property type="entry name" value="BPD_transp_1_N"/>
    <property type="match status" value="1"/>
</dbReference>
<dbReference type="SUPFAM" id="SSF161098">
    <property type="entry name" value="MetI-like"/>
    <property type="match status" value="1"/>
</dbReference>
<dbReference type="PROSITE" id="PS50928">
    <property type="entry name" value="ABC_TM1"/>
    <property type="match status" value="1"/>
</dbReference>
<organism>
    <name type="scientific">Escherichia coli O157:H7</name>
    <dbReference type="NCBI Taxonomy" id="83334"/>
    <lineage>
        <taxon>Bacteria</taxon>
        <taxon>Pseudomonadati</taxon>
        <taxon>Pseudomonadota</taxon>
        <taxon>Gammaproteobacteria</taxon>
        <taxon>Enterobacterales</taxon>
        <taxon>Enterobacteriaceae</taxon>
        <taxon>Escherichia</taxon>
    </lineage>
</organism>
<sequence>MLKFILRRCLEAIPTLFILITISFFMMRLAPGSPFTGERTLPPEVMANIEAKYHLNDPIMTQYFSYLKQLAHGDFGPSFKYKDYSVNDLVASSFPVSAKLGAAAFFLAVILGVSAGVIAALKQNTKWDYTVMGLAMTGVVIPSFVVAPLLVMIFAIILHWLPGGGWNGGALKFMILPMVALSLAYIASIARITRGSMIEVLHSNFIRTARAKGLPMRRIILRHALKPALLPVLSYMGPAFVGIITGSMVIETIYGLPGIGQLFVNGALNRDYSLVLSLTILVGALTILFNAIVDVLYAVIDPKIRY</sequence>